<evidence type="ECO:0000250" key="1"/>
<evidence type="ECO:0000255" key="2"/>
<evidence type="ECO:0000269" key="3">
    <source>
    </source>
</evidence>
<evidence type="ECO:0000305" key="4"/>
<sequence length="368" mass="41498">MPFLWLCWALWALSLVSLREALTGEQILGSLLQQLQLDQPPVLDKADVEGMVIPSHVRTQYVALLQHSHASRSRGKRFSQNLREVAGRFLVSETSTHLLVFGMEQRLPPNSELVQAVLRLFQEPVPRTALRRQKRLSPHSARARVTIEWLRFRDDGSNRTALIDSRLVSIHESGWKAFDVTEAVNFWQQLSRPRQPLLLQVSVQREHLGPGTWSSHKLVRFAAQGTPDGKGQGEPQLELHTLDLKDYGAQGNCDPEAPVTEGTRCCRQEMYLDLQGMKWAENWILEPPGFLTYECVGSCLQLPESLTSRWPFLGPRQCVASEMTSLPMIVSVKEGGRTRPQVVSLPNMRVQTCSCASDGALIPRRLQP</sequence>
<gene>
    <name type="primary">Lefty1</name>
    <name type="synonym">Ebaf</name>
    <name type="synonym">Lefty</name>
    <name type="synonym">Stra3</name>
    <name type="synonym">Tgfb4</name>
</gene>
<reference key="1">
    <citation type="journal article" date="1996" name="Nature">
        <title>Left-right asymmetric expression of the TGF beta-family member lefty in mouse embryos.</title>
        <authorList>
            <person name="Meno C."/>
            <person name="Saijoh Y."/>
            <person name="Fujii H."/>
            <person name="Ikeda M."/>
            <person name="Yokoyama T."/>
            <person name="Yokoyama M."/>
            <person name="Toyoda Y."/>
            <person name="Hamada H."/>
        </authorList>
    </citation>
    <scope>NUCLEOTIDE SEQUENCE [MRNA]</scope>
</reference>
<reference key="2">
    <citation type="submission" date="1996-06" db="EMBL/GenBank/DDBJ databases">
        <authorList>
            <person name="Bouillet P."/>
        </authorList>
    </citation>
    <scope>NUCLEOTIDE SEQUENCE [MRNA]</scope>
</reference>
<reference key="3">
    <citation type="journal article" date="1998" name="Int. J. Dev. Biol.">
        <title>Stra3/lefty, a retinoic acid-inducible novel member of the transforming growth factor-beta superfamily.</title>
        <authorList>
            <person name="Oulad-Abdelghani M."/>
            <person name="Chazaud C."/>
            <person name="Bouillet P."/>
            <person name="Mattei M.-G."/>
            <person name="Dolle P."/>
            <person name="Chambon P."/>
        </authorList>
    </citation>
    <scope>NUCLEOTIDE SEQUENCE [GENOMIC DNA / MRNA]</scope>
</reference>
<reference key="4">
    <citation type="journal article" date="2005" name="Science">
        <title>The transcriptional landscape of the mammalian genome.</title>
        <authorList>
            <person name="Carninci P."/>
            <person name="Kasukawa T."/>
            <person name="Katayama S."/>
            <person name="Gough J."/>
            <person name="Frith M.C."/>
            <person name="Maeda N."/>
            <person name="Oyama R."/>
            <person name="Ravasi T."/>
            <person name="Lenhard B."/>
            <person name="Wells C."/>
            <person name="Kodzius R."/>
            <person name="Shimokawa K."/>
            <person name="Bajic V.B."/>
            <person name="Brenner S.E."/>
            <person name="Batalov S."/>
            <person name="Forrest A.R."/>
            <person name="Zavolan M."/>
            <person name="Davis M.J."/>
            <person name="Wilming L.G."/>
            <person name="Aidinis V."/>
            <person name="Allen J.E."/>
            <person name="Ambesi-Impiombato A."/>
            <person name="Apweiler R."/>
            <person name="Aturaliya R.N."/>
            <person name="Bailey T.L."/>
            <person name="Bansal M."/>
            <person name="Baxter L."/>
            <person name="Beisel K.W."/>
            <person name="Bersano T."/>
            <person name="Bono H."/>
            <person name="Chalk A.M."/>
            <person name="Chiu K.P."/>
            <person name="Choudhary V."/>
            <person name="Christoffels A."/>
            <person name="Clutterbuck D.R."/>
            <person name="Crowe M.L."/>
            <person name="Dalla E."/>
            <person name="Dalrymple B.P."/>
            <person name="de Bono B."/>
            <person name="Della Gatta G."/>
            <person name="di Bernardo D."/>
            <person name="Down T."/>
            <person name="Engstrom P."/>
            <person name="Fagiolini M."/>
            <person name="Faulkner G."/>
            <person name="Fletcher C.F."/>
            <person name="Fukushima T."/>
            <person name="Furuno M."/>
            <person name="Futaki S."/>
            <person name="Gariboldi M."/>
            <person name="Georgii-Hemming P."/>
            <person name="Gingeras T.R."/>
            <person name="Gojobori T."/>
            <person name="Green R.E."/>
            <person name="Gustincich S."/>
            <person name="Harbers M."/>
            <person name="Hayashi Y."/>
            <person name="Hensch T.K."/>
            <person name="Hirokawa N."/>
            <person name="Hill D."/>
            <person name="Huminiecki L."/>
            <person name="Iacono M."/>
            <person name="Ikeo K."/>
            <person name="Iwama A."/>
            <person name="Ishikawa T."/>
            <person name="Jakt M."/>
            <person name="Kanapin A."/>
            <person name="Katoh M."/>
            <person name="Kawasawa Y."/>
            <person name="Kelso J."/>
            <person name="Kitamura H."/>
            <person name="Kitano H."/>
            <person name="Kollias G."/>
            <person name="Krishnan S.P."/>
            <person name="Kruger A."/>
            <person name="Kummerfeld S.K."/>
            <person name="Kurochkin I.V."/>
            <person name="Lareau L.F."/>
            <person name="Lazarevic D."/>
            <person name="Lipovich L."/>
            <person name="Liu J."/>
            <person name="Liuni S."/>
            <person name="McWilliam S."/>
            <person name="Madan Babu M."/>
            <person name="Madera M."/>
            <person name="Marchionni L."/>
            <person name="Matsuda H."/>
            <person name="Matsuzawa S."/>
            <person name="Miki H."/>
            <person name="Mignone F."/>
            <person name="Miyake S."/>
            <person name="Morris K."/>
            <person name="Mottagui-Tabar S."/>
            <person name="Mulder N."/>
            <person name="Nakano N."/>
            <person name="Nakauchi H."/>
            <person name="Ng P."/>
            <person name="Nilsson R."/>
            <person name="Nishiguchi S."/>
            <person name="Nishikawa S."/>
            <person name="Nori F."/>
            <person name="Ohara O."/>
            <person name="Okazaki Y."/>
            <person name="Orlando V."/>
            <person name="Pang K.C."/>
            <person name="Pavan W.J."/>
            <person name="Pavesi G."/>
            <person name="Pesole G."/>
            <person name="Petrovsky N."/>
            <person name="Piazza S."/>
            <person name="Reed J."/>
            <person name="Reid J.F."/>
            <person name="Ring B.Z."/>
            <person name="Ringwald M."/>
            <person name="Rost B."/>
            <person name="Ruan Y."/>
            <person name="Salzberg S.L."/>
            <person name="Sandelin A."/>
            <person name="Schneider C."/>
            <person name="Schoenbach C."/>
            <person name="Sekiguchi K."/>
            <person name="Semple C.A."/>
            <person name="Seno S."/>
            <person name="Sessa L."/>
            <person name="Sheng Y."/>
            <person name="Shibata Y."/>
            <person name="Shimada H."/>
            <person name="Shimada K."/>
            <person name="Silva D."/>
            <person name="Sinclair B."/>
            <person name="Sperling S."/>
            <person name="Stupka E."/>
            <person name="Sugiura K."/>
            <person name="Sultana R."/>
            <person name="Takenaka Y."/>
            <person name="Taki K."/>
            <person name="Tammoja K."/>
            <person name="Tan S.L."/>
            <person name="Tang S."/>
            <person name="Taylor M.S."/>
            <person name="Tegner J."/>
            <person name="Teichmann S.A."/>
            <person name="Ueda H.R."/>
            <person name="van Nimwegen E."/>
            <person name="Verardo R."/>
            <person name="Wei C.L."/>
            <person name="Yagi K."/>
            <person name="Yamanishi H."/>
            <person name="Zabarovsky E."/>
            <person name="Zhu S."/>
            <person name="Zimmer A."/>
            <person name="Hide W."/>
            <person name="Bult C."/>
            <person name="Grimmond S.M."/>
            <person name="Teasdale R.D."/>
            <person name="Liu E.T."/>
            <person name="Brusic V."/>
            <person name="Quackenbush J."/>
            <person name="Wahlestedt C."/>
            <person name="Mattick J.S."/>
            <person name="Hume D.A."/>
            <person name="Kai C."/>
            <person name="Sasaki D."/>
            <person name="Tomaru Y."/>
            <person name="Fukuda S."/>
            <person name="Kanamori-Katayama M."/>
            <person name="Suzuki M."/>
            <person name="Aoki J."/>
            <person name="Arakawa T."/>
            <person name="Iida J."/>
            <person name="Imamura K."/>
            <person name="Itoh M."/>
            <person name="Kato T."/>
            <person name="Kawaji H."/>
            <person name="Kawagashira N."/>
            <person name="Kawashima T."/>
            <person name="Kojima M."/>
            <person name="Kondo S."/>
            <person name="Konno H."/>
            <person name="Nakano K."/>
            <person name="Ninomiya N."/>
            <person name="Nishio T."/>
            <person name="Okada M."/>
            <person name="Plessy C."/>
            <person name="Shibata K."/>
            <person name="Shiraki T."/>
            <person name="Suzuki S."/>
            <person name="Tagami M."/>
            <person name="Waki K."/>
            <person name="Watahiki A."/>
            <person name="Okamura-Oho Y."/>
            <person name="Suzuki H."/>
            <person name="Kawai J."/>
            <person name="Hayashizaki Y."/>
        </authorList>
    </citation>
    <scope>NUCLEOTIDE SEQUENCE [LARGE SCALE MRNA]</scope>
    <source>
        <strain>C57BL/6J</strain>
        <tissue>Embryonic stem cell</tissue>
    </source>
</reference>
<reference key="5">
    <citation type="journal article" date="2004" name="Genome Res.">
        <title>The status, quality, and expansion of the NIH full-length cDNA project: the Mammalian Gene Collection (MGC).</title>
        <authorList>
            <consortium name="The MGC Project Team"/>
        </authorList>
    </citation>
    <scope>NUCLEOTIDE SEQUENCE [LARGE SCALE MRNA]</scope>
    <source>
        <tissue>Embryonic stem cell</tissue>
    </source>
</reference>
<reference key="6">
    <citation type="journal article" date="1998" name="Cell">
        <title>Lefty-1 is required for left-right determination as a regulator of lefty-2 and nodal.</title>
        <authorList>
            <person name="Meno C."/>
            <person name="Shimono A."/>
            <person name="Saijoh Y."/>
            <person name="Yashiro K."/>
            <person name="Mochida K."/>
            <person name="Ohishi S."/>
            <person name="Noji S."/>
            <person name="Kondoh H."/>
            <person name="Hamada H."/>
        </authorList>
    </citation>
    <scope>FUNCTION</scope>
</reference>
<organism>
    <name type="scientific">Mus musculus</name>
    <name type="common">Mouse</name>
    <dbReference type="NCBI Taxonomy" id="10090"/>
    <lineage>
        <taxon>Eukaryota</taxon>
        <taxon>Metazoa</taxon>
        <taxon>Chordata</taxon>
        <taxon>Craniata</taxon>
        <taxon>Vertebrata</taxon>
        <taxon>Euteleostomi</taxon>
        <taxon>Mammalia</taxon>
        <taxon>Eutheria</taxon>
        <taxon>Euarchontoglires</taxon>
        <taxon>Glires</taxon>
        <taxon>Rodentia</taxon>
        <taxon>Myomorpha</taxon>
        <taxon>Muroidea</taxon>
        <taxon>Muridae</taxon>
        <taxon>Murinae</taxon>
        <taxon>Mus</taxon>
        <taxon>Mus</taxon>
    </lineage>
</organism>
<dbReference type="EMBL" id="D83921">
    <property type="protein sequence ID" value="BAA12121.1"/>
    <property type="molecule type" value="mRNA"/>
</dbReference>
<dbReference type="EMBL" id="Z73151">
    <property type="protein sequence ID" value="CAA97497.1"/>
    <property type="molecule type" value="mRNA"/>
</dbReference>
<dbReference type="EMBL" id="AJ000082">
    <property type="protein sequence ID" value="CAA03909.1"/>
    <property type="molecule type" value="mRNA"/>
</dbReference>
<dbReference type="EMBL" id="AJ000083">
    <property type="protein sequence ID" value="CAA03910.1"/>
    <property type="molecule type" value="Genomic_DNA"/>
</dbReference>
<dbReference type="EMBL" id="AK131943">
    <property type="protein sequence ID" value="BAE20889.1"/>
    <property type="molecule type" value="mRNA"/>
</dbReference>
<dbReference type="EMBL" id="BC050221">
    <property type="protein sequence ID" value="AAH50221.1"/>
    <property type="molecule type" value="mRNA"/>
</dbReference>
<dbReference type="CCDS" id="CCDS15577.1"/>
<dbReference type="PIR" id="S67507">
    <property type="entry name" value="S67507"/>
</dbReference>
<dbReference type="RefSeq" id="NP_034224.1">
    <property type="nucleotide sequence ID" value="NM_010094.4"/>
</dbReference>
<dbReference type="DIP" id="DIP-46067N"/>
<dbReference type="FunCoup" id="Q64280">
    <property type="interactions" value="659"/>
</dbReference>
<dbReference type="IntAct" id="Q64280">
    <property type="interactions" value="1"/>
</dbReference>
<dbReference type="STRING" id="10090.ENSMUSP00000041427"/>
<dbReference type="GlyCosmos" id="Q64280">
    <property type="glycosylation" value="1 site, No reported glycans"/>
</dbReference>
<dbReference type="GlyGen" id="Q64280">
    <property type="glycosylation" value="1 site"/>
</dbReference>
<dbReference type="PhosphoSitePlus" id="Q64280"/>
<dbReference type="PaxDb" id="10090-ENSMUSP00000041427"/>
<dbReference type="PeptideAtlas" id="Q64280"/>
<dbReference type="DNASU" id="13590"/>
<dbReference type="Ensembl" id="ENSMUST00000037361.9">
    <property type="protein sequence ID" value="ENSMUSP00000041427.9"/>
    <property type="gene ID" value="ENSMUSG00000038793.9"/>
</dbReference>
<dbReference type="GeneID" id="13590"/>
<dbReference type="KEGG" id="mmu:13590"/>
<dbReference type="UCSC" id="uc007dww.1">
    <property type="organism name" value="mouse"/>
</dbReference>
<dbReference type="AGR" id="MGI:107405"/>
<dbReference type="CTD" id="10637"/>
<dbReference type="MGI" id="MGI:107405">
    <property type="gene designation" value="Lefty1"/>
</dbReference>
<dbReference type="VEuPathDB" id="HostDB:ENSMUSG00000038793"/>
<dbReference type="eggNOG" id="KOG3900">
    <property type="taxonomic scope" value="Eukaryota"/>
</dbReference>
<dbReference type="GeneTree" id="ENSGT00390000010056"/>
<dbReference type="HOGENOM" id="CLU_064098_0_0_1"/>
<dbReference type="InParanoid" id="Q64280"/>
<dbReference type="OMA" id="VSVYWVQ"/>
<dbReference type="OrthoDB" id="10019514at2759"/>
<dbReference type="PhylomeDB" id="Q64280"/>
<dbReference type="TreeFam" id="TF106462"/>
<dbReference type="Reactome" id="R-MMU-114608">
    <property type="pathway name" value="Platelet degranulation"/>
</dbReference>
<dbReference type="BioGRID-ORCS" id="13590">
    <property type="hits" value="2 hits in 75 CRISPR screens"/>
</dbReference>
<dbReference type="PRO" id="PR:Q64280"/>
<dbReference type="Proteomes" id="UP000000589">
    <property type="component" value="Chromosome 1"/>
</dbReference>
<dbReference type="RNAct" id="Q64280">
    <property type="molecule type" value="protein"/>
</dbReference>
<dbReference type="Bgee" id="ENSMUSG00000038793">
    <property type="expression patterns" value="Expressed in neural plate and 80 other cell types or tissues"/>
</dbReference>
<dbReference type="GO" id="GO:0005576">
    <property type="term" value="C:extracellular region"/>
    <property type="evidence" value="ECO:0000314"/>
    <property type="project" value="UniProtKB"/>
</dbReference>
<dbReference type="GO" id="GO:0005615">
    <property type="term" value="C:extracellular space"/>
    <property type="evidence" value="ECO:0007669"/>
    <property type="project" value="UniProtKB-KW"/>
</dbReference>
<dbReference type="GO" id="GO:0005125">
    <property type="term" value="F:cytokine activity"/>
    <property type="evidence" value="ECO:0007669"/>
    <property type="project" value="UniProtKB-KW"/>
</dbReference>
<dbReference type="GO" id="GO:0008083">
    <property type="term" value="F:growth factor activity"/>
    <property type="evidence" value="ECO:0007669"/>
    <property type="project" value="UniProtKB-KW"/>
</dbReference>
<dbReference type="GO" id="GO:0038100">
    <property type="term" value="F:nodal binding"/>
    <property type="evidence" value="ECO:0000353"/>
    <property type="project" value="UniProtKB"/>
</dbReference>
<dbReference type="GO" id="GO:0005160">
    <property type="term" value="F:transforming growth factor beta receptor binding"/>
    <property type="evidence" value="ECO:0007669"/>
    <property type="project" value="InterPro"/>
</dbReference>
<dbReference type="GO" id="GO:0009948">
    <property type="term" value="P:anterior/posterior axis specification"/>
    <property type="evidence" value="ECO:0000316"/>
    <property type="project" value="MGI"/>
</dbReference>
<dbReference type="GO" id="GO:0042074">
    <property type="term" value="P:cell migration involved in gastrulation"/>
    <property type="evidence" value="ECO:0000316"/>
    <property type="project" value="MGI"/>
</dbReference>
<dbReference type="GO" id="GO:0008283">
    <property type="term" value="P:cell population proliferation"/>
    <property type="evidence" value="ECO:0000316"/>
    <property type="project" value="MGI"/>
</dbReference>
<dbReference type="GO" id="GO:0007368">
    <property type="term" value="P:determination of left/right symmetry"/>
    <property type="evidence" value="ECO:0000314"/>
    <property type="project" value="BHF-UCL"/>
</dbReference>
<dbReference type="GO" id="GO:0003007">
    <property type="term" value="P:heart morphogenesis"/>
    <property type="evidence" value="ECO:0000315"/>
    <property type="project" value="BHF-UCL"/>
</dbReference>
<dbReference type="GO" id="GO:0008285">
    <property type="term" value="P:negative regulation of cell population proliferation"/>
    <property type="evidence" value="ECO:0000316"/>
    <property type="project" value="MGI"/>
</dbReference>
<dbReference type="GO" id="GO:1900124">
    <property type="term" value="P:negative regulation of nodal receptor complex assembly"/>
    <property type="evidence" value="ECO:0000314"/>
    <property type="project" value="UniProtKB"/>
</dbReference>
<dbReference type="GO" id="GO:1900108">
    <property type="term" value="P:negative regulation of nodal signaling pathway"/>
    <property type="evidence" value="ECO:0000314"/>
    <property type="project" value="UniProtKB"/>
</dbReference>
<dbReference type="GO" id="GO:0000122">
    <property type="term" value="P:negative regulation of transcription by RNA polymerase II"/>
    <property type="evidence" value="ECO:0000314"/>
    <property type="project" value="BHF-UCL"/>
</dbReference>
<dbReference type="GO" id="GO:0032526">
    <property type="term" value="P:response to retinoic acid"/>
    <property type="evidence" value="ECO:0000314"/>
    <property type="project" value="MGI"/>
</dbReference>
<dbReference type="CDD" id="cd13758">
    <property type="entry name" value="TGF_beta_LEFTY1_2"/>
    <property type="match status" value="1"/>
</dbReference>
<dbReference type="FunFam" id="2.10.90.10:FF:000028">
    <property type="entry name" value="Left-right determination factor"/>
    <property type="match status" value="1"/>
</dbReference>
<dbReference type="FunFam" id="2.60.120.970:FF:000015">
    <property type="entry name" value="Left-right determination factor"/>
    <property type="match status" value="1"/>
</dbReference>
<dbReference type="Gene3D" id="2.60.120.970">
    <property type="match status" value="1"/>
</dbReference>
<dbReference type="Gene3D" id="2.10.90.10">
    <property type="entry name" value="Cystine-knot cytokines"/>
    <property type="match status" value="1"/>
</dbReference>
<dbReference type="InterPro" id="IPR029034">
    <property type="entry name" value="Cystine-knot_cytokine"/>
</dbReference>
<dbReference type="InterPro" id="IPR003942">
    <property type="entry name" value="LRDF"/>
</dbReference>
<dbReference type="InterPro" id="IPR001839">
    <property type="entry name" value="TGF-b_C"/>
</dbReference>
<dbReference type="InterPro" id="IPR001111">
    <property type="entry name" value="TGF-b_propeptide"/>
</dbReference>
<dbReference type="InterPro" id="IPR015615">
    <property type="entry name" value="TGF-beta-rel"/>
</dbReference>
<dbReference type="InterPro" id="IPR017948">
    <property type="entry name" value="TGFb_CS"/>
</dbReference>
<dbReference type="PANTHER" id="PTHR11848:SF181">
    <property type="entry name" value="LEFT-RIGHT DETERMINATION FACTOR 1"/>
    <property type="match status" value="1"/>
</dbReference>
<dbReference type="PANTHER" id="PTHR11848">
    <property type="entry name" value="TGF-BETA FAMILY"/>
    <property type="match status" value="1"/>
</dbReference>
<dbReference type="Pfam" id="PF00019">
    <property type="entry name" value="TGF_beta"/>
    <property type="match status" value="1"/>
</dbReference>
<dbReference type="Pfam" id="PF00688">
    <property type="entry name" value="TGFb_propeptide"/>
    <property type="match status" value="1"/>
</dbReference>
<dbReference type="PIRSF" id="PIRSF037402">
    <property type="entry name" value="TGFb4"/>
    <property type="match status" value="1"/>
</dbReference>
<dbReference type="PRINTS" id="PR01427">
    <property type="entry name" value="TGFBETA4"/>
</dbReference>
<dbReference type="SMART" id="SM00204">
    <property type="entry name" value="TGFB"/>
    <property type="match status" value="1"/>
</dbReference>
<dbReference type="SUPFAM" id="SSF57501">
    <property type="entry name" value="Cystine-knot cytokines"/>
    <property type="match status" value="1"/>
</dbReference>
<dbReference type="PROSITE" id="PS00250">
    <property type="entry name" value="TGF_BETA_1"/>
    <property type="match status" value="1"/>
</dbReference>
<dbReference type="PROSITE" id="PS51362">
    <property type="entry name" value="TGF_BETA_2"/>
    <property type="match status" value="1"/>
</dbReference>
<feature type="signal peptide" evidence="2">
    <location>
        <begin position="1"/>
        <end position="21"/>
    </location>
</feature>
<feature type="propeptide" id="PRO_0000033808" description="Or 135" evidence="2">
    <location>
        <begin position="22"/>
        <end position="76"/>
    </location>
</feature>
<feature type="chain" id="PRO_0000033809" description="Left-right determination factor 1">
    <location>
        <begin position="77"/>
        <end position="368"/>
    </location>
</feature>
<feature type="glycosylation site" description="N-linked (GlcNAc...) asparagine" evidence="2">
    <location>
        <position position="158"/>
    </location>
</feature>
<feature type="disulfide bond" evidence="1">
    <location>
        <begin position="253"/>
        <end position="266"/>
    </location>
</feature>
<feature type="disulfide bond" evidence="1">
    <location>
        <begin position="265"/>
        <end position="318"/>
    </location>
</feature>
<feature type="disulfide bond" evidence="1">
    <location>
        <begin position="295"/>
        <end position="353"/>
    </location>
</feature>
<feature type="disulfide bond" evidence="1">
    <location>
        <begin position="299"/>
        <end position="355"/>
    </location>
</feature>
<keyword id="KW-0202">Cytokine</keyword>
<keyword id="KW-0217">Developmental protein</keyword>
<keyword id="KW-1015">Disulfide bond</keyword>
<keyword id="KW-0325">Glycoprotein</keyword>
<keyword id="KW-0339">Growth factor</keyword>
<keyword id="KW-1185">Reference proteome</keyword>
<keyword id="KW-0964">Secreted</keyword>
<keyword id="KW-0732">Signal</keyword>
<protein>
    <recommendedName>
        <fullName>Left-right determination factor 1</fullName>
    </recommendedName>
    <alternativeName>
        <fullName>Protein lefty-1</fullName>
        <shortName>Lefty protein</shortName>
    </alternativeName>
    <alternativeName>
        <fullName>Stimulated by retinoic acid gene 3 protein</fullName>
    </alternativeName>
    <alternativeName>
        <fullName>Transforming growth factor beta-4</fullName>
        <shortName>TGF-beta-4</shortName>
    </alternativeName>
</protein>
<accession>Q64280</accession>
<accession>Q3V2A9</accession>
<name>LFTY1_MOUSE</name>
<comment type="function">
    <text evidence="3">Required for left-right axis determination as a regulator of LEFTY2 and NODAL.</text>
</comment>
<comment type="subcellular location">
    <subcellularLocation>
        <location>Secreted</location>
    </subcellularLocation>
</comment>
<comment type="developmental stage">
    <text>By 8.0 dpc, expressed exclusively on the left side of developing embryos with expression predominantly in the prospective floor plate (PFP). Weak expression in the lateral-plate mesoderm (LPM).</text>
</comment>
<comment type="PTM">
    <text>The processing of the protein may also occur at the second R-X-X-R site located at AA 132-135. Processing appears to be regulated in a cell-type specific manner.</text>
</comment>
<comment type="similarity">
    <text evidence="4">Belongs to the TGF-beta family.</text>
</comment>
<proteinExistence type="evidence at transcript level"/>